<name>PESC_ASPTN</name>
<comment type="function">
    <text evidence="1">Component of the NOP7 complex, which is required for maturation of the 25S and 5.8S ribosomal RNAs and formation of the 60S ribosome.</text>
</comment>
<comment type="subunit">
    <text evidence="1">Component of the NOP7 complex, composed of erb1, nop7 and ytm1. The complex is held together by erb1, which interacts with nop7 via its N-terminal domain and with ytm1 via a high-affinity interaction between the seven-bladed beta-propeller domains of the 2 proteins. The NOP7 complex associates with the 66S pre-ribosome.</text>
</comment>
<comment type="subcellular location">
    <subcellularLocation>
        <location evidence="1">Nucleus</location>
        <location evidence="1">Nucleolus</location>
    </subcellularLocation>
    <subcellularLocation>
        <location evidence="1">Nucleus</location>
        <location evidence="1">Nucleoplasm</location>
    </subcellularLocation>
</comment>
<comment type="similarity">
    <text evidence="1">Belongs to the pescadillo family.</text>
</comment>
<proteinExistence type="inferred from homology"/>
<accession>Q0CLP9</accession>
<organism>
    <name type="scientific">Aspergillus terreus (strain NIH 2624 / FGSC A1156)</name>
    <dbReference type="NCBI Taxonomy" id="341663"/>
    <lineage>
        <taxon>Eukaryota</taxon>
        <taxon>Fungi</taxon>
        <taxon>Dikarya</taxon>
        <taxon>Ascomycota</taxon>
        <taxon>Pezizomycotina</taxon>
        <taxon>Eurotiomycetes</taxon>
        <taxon>Eurotiomycetidae</taxon>
        <taxon>Eurotiales</taxon>
        <taxon>Aspergillaceae</taxon>
        <taxon>Aspergillus</taxon>
        <taxon>Aspergillus subgen. Circumdati</taxon>
    </lineage>
</organism>
<keyword id="KW-0175">Coiled coil</keyword>
<keyword id="KW-0539">Nucleus</keyword>
<keyword id="KW-1185">Reference proteome</keyword>
<keyword id="KW-0690">Ribosome biogenesis</keyword>
<keyword id="KW-0698">rRNA processing</keyword>
<reference key="1">
    <citation type="submission" date="2005-09" db="EMBL/GenBank/DDBJ databases">
        <title>Annotation of the Aspergillus terreus NIH2624 genome.</title>
        <authorList>
            <person name="Birren B.W."/>
            <person name="Lander E.S."/>
            <person name="Galagan J.E."/>
            <person name="Nusbaum C."/>
            <person name="Devon K."/>
            <person name="Henn M."/>
            <person name="Ma L.-J."/>
            <person name="Jaffe D.B."/>
            <person name="Butler J."/>
            <person name="Alvarez P."/>
            <person name="Gnerre S."/>
            <person name="Grabherr M."/>
            <person name="Kleber M."/>
            <person name="Mauceli E.W."/>
            <person name="Brockman W."/>
            <person name="Rounsley S."/>
            <person name="Young S.K."/>
            <person name="LaButti K."/>
            <person name="Pushparaj V."/>
            <person name="DeCaprio D."/>
            <person name="Crawford M."/>
            <person name="Koehrsen M."/>
            <person name="Engels R."/>
            <person name="Montgomery P."/>
            <person name="Pearson M."/>
            <person name="Howarth C."/>
            <person name="Larson L."/>
            <person name="Luoma S."/>
            <person name="White J."/>
            <person name="Alvarado L."/>
            <person name="Kodira C.D."/>
            <person name="Zeng Q."/>
            <person name="Oleary S."/>
            <person name="Yandava C."/>
            <person name="Denning D.W."/>
            <person name="Nierman W.C."/>
            <person name="Milne T."/>
            <person name="Madden K."/>
        </authorList>
    </citation>
    <scope>NUCLEOTIDE SEQUENCE [LARGE SCALE GENOMIC DNA]</scope>
    <source>
        <strain>NIH 2624 / FGSC A1156</strain>
    </source>
</reference>
<feature type="chain" id="PRO_0000370482" description="Pescadillo homolog">
    <location>
        <begin position="1"/>
        <end position="676"/>
    </location>
</feature>
<feature type="domain" description="BRCT" evidence="1">
    <location>
        <begin position="351"/>
        <end position="467"/>
    </location>
</feature>
<feature type="region of interest" description="Disordered" evidence="2">
    <location>
        <begin position="277"/>
        <end position="296"/>
    </location>
</feature>
<feature type="region of interest" description="Disordered" evidence="2">
    <location>
        <begin position="471"/>
        <end position="676"/>
    </location>
</feature>
<feature type="coiled-coil region" evidence="1">
    <location>
        <begin position="571"/>
        <end position="676"/>
    </location>
</feature>
<feature type="compositionally biased region" description="Low complexity" evidence="2">
    <location>
        <begin position="281"/>
        <end position="291"/>
    </location>
</feature>
<feature type="compositionally biased region" description="Acidic residues" evidence="2">
    <location>
        <begin position="494"/>
        <end position="519"/>
    </location>
</feature>
<feature type="compositionally biased region" description="Basic and acidic residues" evidence="2">
    <location>
        <begin position="520"/>
        <end position="531"/>
    </location>
</feature>
<feature type="compositionally biased region" description="Acidic residues" evidence="2">
    <location>
        <begin position="532"/>
        <end position="541"/>
    </location>
</feature>
<feature type="compositionally biased region" description="Acidic residues" evidence="2">
    <location>
        <begin position="548"/>
        <end position="581"/>
    </location>
</feature>
<feature type="compositionally biased region" description="Basic and acidic residues" evidence="2">
    <location>
        <begin position="582"/>
        <end position="592"/>
    </location>
</feature>
<feature type="compositionally biased region" description="Basic residues" evidence="2">
    <location>
        <begin position="611"/>
        <end position="624"/>
    </location>
</feature>
<feature type="compositionally biased region" description="Basic and acidic residues" evidence="2">
    <location>
        <begin position="625"/>
        <end position="635"/>
    </location>
</feature>
<sequence>MAKIKKKGTSGQAKNYITRTQAVRKLQISLPDFRRLCIFKGIYPREPRNKKKASKTSTPNTTFYYTKDIQYLLHEPLLRKFRDQKAVAKKIARSLGRGEVGDASRLEKNHAPKLTLDHIIKERYPTFIDALRDLDDALSLLFLFANLPSTSHVPPKTIALCQRLCHEFQHYLITTNSLRKSFLSIKGIYYQATIQGQDIMWLVPYRFVQRVNGDVDYRIMATFVEFYTTLLGFVNFRLYSSIGLRYPPKFDTRSDENGAELAAFTLEGRAVANAAKTIEGSNKQSNNSSNQEVSRDVQAKVDKVIKTAGLDKTKDEQTVEATDENTDAIDRFEPAAPEADTLPQPDISGEEAGALFAPFTFYISREAPKAPLEFILRAFGCKRIGWDAVMGDGAFTHNEADTRITHQIVDRPSLPEGALPAVPAAKEGAVPAVRPGTRIPGRTYIQPQWVWDCINEGKLLRPDLYAPGETLPPHLSPWVKPSKGAYDPRATLAEQEEEGEAEMAGEEEEEESDEEMEEAPETKKADAKADESESEDEDESVDGGMDVADSDDDESESGQEEEDFGGFDDNEAASESEDEEEAARTQHQKELEAEAAGLPFSSNGATDDAKKKKSSQAKKIAAKKRKEEEELERQKMMMSRKKRKLLEKMMYSNKKQSEEAAKLRSKRRKLEKTGEK</sequence>
<gene>
    <name type="primary">nop7</name>
    <name type="ORF">ATEG_05385</name>
</gene>
<dbReference type="EMBL" id="CH476600">
    <property type="protein sequence ID" value="EAU34454.1"/>
    <property type="molecule type" value="Genomic_DNA"/>
</dbReference>
<dbReference type="RefSeq" id="XP_001214563.1">
    <property type="nucleotide sequence ID" value="XM_001214563.1"/>
</dbReference>
<dbReference type="SMR" id="Q0CLP9"/>
<dbReference type="STRING" id="341663.Q0CLP9"/>
<dbReference type="EnsemblFungi" id="EAU34454">
    <property type="protein sequence ID" value="EAU34454"/>
    <property type="gene ID" value="ATEG_05385"/>
</dbReference>
<dbReference type="GeneID" id="4321179"/>
<dbReference type="VEuPathDB" id="FungiDB:ATEG_05385"/>
<dbReference type="eggNOG" id="KOG2481">
    <property type="taxonomic scope" value="Eukaryota"/>
</dbReference>
<dbReference type="HOGENOM" id="CLU_019619_1_1_1"/>
<dbReference type="OMA" id="QKVTWIV"/>
<dbReference type="OrthoDB" id="10264910at2759"/>
<dbReference type="Proteomes" id="UP000007963">
    <property type="component" value="Unassembled WGS sequence"/>
</dbReference>
<dbReference type="GO" id="GO:0005654">
    <property type="term" value="C:nucleoplasm"/>
    <property type="evidence" value="ECO:0007669"/>
    <property type="project" value="UniProtKB-SubCell"/>
</dbReference>
<dbReference type="GO" id="GO:0070545">
    <property type="term" value="C:PeBoW complex"/>
    <property type="evidence" value="ECO:0007669"/>
    <property type="project" value="TreeGrafter"/>
</dbReference>
<dbReference type="GO" id="GO:0030687">
    <property type="term" value="C:preribosome, large subunit precursor"/>
    <property type="evidence" value="ECO:0007669"/>
    <property type="project" value="UniProtKB-UniRule"/>
</dbReference>
<dbReference type="GO" id="GO:0043021">
    <property type="term" value="F:ribonucleoprotein complex binding"/>
    <property type="evidence" value="ECO:0007669"/>
    <property type="project" value="UniProtKB-UniRule"/>
</dbReference>
<dbReference type="GO" id="GO:0003723">
    <property type="term" value="F:RNA binding"/>
    <property type="evidence" value="ECO:0007669"/>
    <property type="project" value="TreeGrafter"/>
</dbReference>
<dbReference type="GO" id="GO:0000466">
    <property type="term" value="P:maturation of 5.8S rRNA from tricistronic rRNA transcript (SSU-rRNA, 5.8S rRNA, LSU-rRNA)"/>
    <property type="evidence" value="ECO:0007669"/>
    <property type="project" value="UniProtKB-UniRule"/>
</dbReference>
<dbReference type="GO" id="GO:0000463">
    <property type="term" value="P:maturation of LSU-rRNA from tricistronic rRNA transcript (SSU-rRNA, 5.8S rRNA, LSU-rRNA)"/>
    <property type="evidence" value="ECO:0007669"/>
    <property type="project" value="UniProtKB-UniRule"/>
</dbReference>
<dbReference type="CDD" id="cd17709">
    <property type="entry name" value="BRCT_pescadillo_like"/>
    <property type="match status" value="1"/>
</dbReference>
<dbReference type="Gene3D" id="3.40.50.10190">
    <property type="entry name" value="BRCT domain"/>
    <property type="match status" value="1"/>
</dbReference>
<dbReference type="HAMAP" id="MF_03028">
    <property type="entry name" value="Pescadillo"/>
    <property type="match status" value="1"/>
</dbReference>
<dbReference type="InterPro" id="IPR001357">
    <property type="entry name" value="BRCT_dom"/>
</dbReference>
<dbReference type="InterPro" id="IPR036420">
    <property type="entry name" value="BRCT_dom_sf"/>
</dbReference>
<dbReference type="InterPro" id="IPR010613">
    <property type="entry name" value="PES"/>
</dbReference>
<dbReference type="PANTHER" id="PTHR12221">
    <property type="entry name" value="PESCADILLO - RELATED"/>
    <property type="match status" value="1"/>
</dbReference>
<dbReference type="PANTHER" id="PTHR12221:SF6">
    <property type="entry name" value="PESCADILLO HOMOLOG"/>
    <property type="match status" value="1"/>
</dbReference>
<dbReference type="Pfam" id="PF06732">
    <property type="entry name" value="Pescadillo_N"/>
    <property type="match status" value="1"/>
</dbReference>
<dbReference type="SUPFAM" id="SSF52113">
    <property type="entry name" value="BRCT domain"/>
    <property type="match status" value="1"/>
</dbReference>
<dbReference type="PROSITE" id="PS50172">
    <property type="entry name" value="BRCT"/>
    <property type="match status" value="1"/>
</dbReference>
<protein>
    <recommendedName>
        <fullName evidence="1">Pescadillo homolog</fullName>
    </recommendedName>
    <alternativeName>
        <fullName evidence="1">Nucleolar protein 7 homolog</fullName>
    </alternativeName>
</protein>
<evidence type="ECO:0000255" key="1">
    <source>
        <dbReference type="HAMAP-Rule" id="MF_03028"/>
    </source>
</evidence>
<evidence type="ECO:0000256" key="2">
    <source>
        <dbReference type="SAM" id="MobiDB-lite"/>
    </source>
</evidence>